<feature type="chain" id="PRO_0000095150" description="Adenylosuccinate synthetase">
    <location>
        <begin position="1"/>
        <end position="435"/>
    </location>
</feature>
<feature type="active site" description="Proton acceptor" evidence="1">
    <location>
        <position position="18"/>
    </location>
</feature>
<feature type="active site" description="Proton donor" evidence="1">
    <location>
        <position position="46"/>
    </location>
</feature>
<feature type="binding site" evidence="1">
    <location>
        <begin position="17"/>
        <end position="23"/>
    </location>
    <ligand>
        <name>GTP</name>
        <dbReference type="ChEBI" id="CHEBI:37565"/>
    </ligand>
</feature>
<feature type="binding site" description="in other chain" evidence="1">
    <location>
        <begin position="18"/>
        <end position="21"/>
    </location>
    <ligand>
        <name>IMP</name>
        <dbReference type="ChEBI" id="CHEBI:58053"/>
        <note>ligand shared between dimeric partners</note>
    </ligand>
</feature>
<feature type="binding site" evidence="1">
    <location>
        <position position="18"/>
    </location>
    <ligand>
        <name>Mg(2+)</name>
        <dbReference type="ChEBI" id="CHEBI:18420"/>
    </ligand>
</feature>
<feature type="binding site" description="in other chain" evidence="1">
    <location>
        <begin position="43"/>
        <end position="46"/>
    </location>
    <ligand>
        <name>IMP</name>
        <dbReference type="ChEBI" id="CHEBI:58053"/>
        <note>ligand shared between dimeric partners</note>
    </ligand>
</feature>
<feature type="binding site" evidence="1">
    <location>
        <begin position="45"/>
        <end position="47"/>
    </location>
    <ligand>
        <name>GTP</name>
        <dbReference type="ChEBI" id="CHEBI:37565"/>
    </ligand>
</feature>
<feature type="binding site" evidence="1">
    <location>
        <position position="45"/>
    </location>
    <ligand>
        <name>Mg(2+)</name>
        <dbReference type="ChEBI" id="CHEBI:18420"/>
    </ligand>
</feature>
<feature type="binding site" description="in other chain" evidence="1">
    <location>
        <position position="134"/>
    </location>
    <ligand>
        <name>IMP</name>
        <dbReference type="ChEBI" id="CHEBI:58053"/>
        <note>ligand shared between dimeric partners</note>
    </ligand>
</feature>
<feature type="binding site" evidence="1">
    <location>
        <position position="148"/>
    </location>
    <ligand>
        <name>IMP</name>
        <dbReference type="ChEBI" id="CHEBI:58053"/>
        <note>ligand shared between dimeric partners</note>
    </ligand>
</feature>
<feature type="binding site" description="in other chain" evidence="1">
    <location>
        <position position="229"/>
    </location>
    <ligand>
        <name>IMP</name>
        <dbReference type="ChEBI" id="CHEBI:58053"/>
        <note>ligand shared between dimeric partners</note>
    </ligand>
</feature>
<feature type="binding site" description="in other chain" evidence="1">
    <location>
        <position position="244"/>
    </location>
    <ligand>
        <name>IMP</name>
        <dbReference type="ChEBI" id="CHEBI:58053"/>
        <note>ligand shared between dimeric partners</note>
    </ligand>
</feature>
<feature type="binding site" evidence="1">
    <location>
        <begin position="304"/>
        <end position="310"/>
    </location>
    <ligand>
        <name>substrate</name>
    </ligand>
</feature>
<feature type="binding site" description="in other chain" evidence="1">
    <location>
        <position position="308"/>
    </location>
    <ligand>
        <name>IMP</name>
        <dbReference type="ChEBI" id="CHEBI:58053"/>
        <note>ligand shared between dimeric partners</note>
    </ligand>
</feature>
<feature type="binding site" evidence="1">
    <location>
        <position position="310"/>
    </location>
    <ligand>
        <name>GTP</name>
        <dbReference type="ChEBI" id="CHEBI:37565"/>
    </ligand>
</feature>
<feature type="binding site" evidence="1">
    <location>
        <begin position="336"/>
        <end position="338"/>
    </location>
    <ligand>
        <name>GTP</name>
        <dbReference type="ChEBI" id="CHEBI:37565"/>
    </ligand>
</feature>
<feature type="binding site" evidence="1">
    <location>
        <begin position="418"/>
        <end position="420"/>
    </location>
    <ligand>
        <name>GTP</name>
        <dbReference type="ChEBI" id="CHEBI:37565"/>
    </ligand>
</feature>
<organism>
    <name type="scientific">Bordetella parapertussis (strain 12822 / ATCC BAA-587 / NCTC 13253)</name>
    <dbReference type="NCBI Taxonomy" id="257311"/>
    <lineage>
        <taxon>Bacteria</taxon>
        <taxon>Pseudomonadati</taxon>
        <taxon>Pseudomonadota</taxon>
        <taxon>Betaproteobacteria</taxon>
        <taxon>Burkholderiales</taxon>
        <taxon>Alcaligenaceae</taxon>
        <taxon>Bordetella</taxon>
    </lineage>
</organism>
<proteinExistence type="inferred from homology"/>
<sequence length="435" mass="46869">MIRKMSKNVVVIGTQWGDEGKGKIVDWLAESVQGVVRFQGGHNAGHTLWINGKKTILRLIPSGIMHDGVTCFIGNGVVLSPEALLREIEELEAAGLDVRSRLQVSEICTLILPYHVAVDKAREARKGEGKIGTTGRGIGPAYEDKVARRALRVQDLFNPALFDEKLAEVLDYHNFVLTQYLGAEPVSANEVRDQAMALAPALAPMVRDVSSNLFVLQQEGKNLLFEGAQGALLDVDHGTYPFVTSSNCVAGAASAGAGVGPQALQYVLGITKAYTTRVGSGPFPTELVDEIGTRLATIGKEFGSVTGRPRRCGWFDGAALKRSVRLNGISGLCITKLDVLDGLETIQLGVGYRVNGEFRDVLPYGAHAVAQAQAVLEELPGWTESTVGITEYSKLPVNARRYLERVAEVCGVPIDLVSTGPDRNETIVLRHPFKG</sequence>
<keyword id="KW-0963">Cytoplasm</keyword>
<keyword id="KW-0342">GTP-binding</keyword>
<keyword id="KW-0436">Ligase</keyword>
<keyword id="KW-0460">Magnesium</keyword>
<keyword id="KW-0479">Metal-binding</keyword>
<keyword id="KW-0547">Nucleotide-binding</keyword>
<keyword id="KW-0658">Purine biosynthesis</keyword>
<protein>
    <recommendedName>
        <fullName evidence="1">Adenylosuccinate synthetase</fullName>
        <shortName evidence="1">AMPSase</shortName>
        <shortName evidence="1">AdSS</shortName>
        <ecNumber evidence="1">6.3.4.4</ecNumber>
    </recommendedName>
    <alternativeName>
        <fullName evidence="1">IMP--aspartate ligase</fullName>
    </alternativeName>
</protein>
<accession>Q7W6Q7</accession>
<gene>
    <name evidence="1" type="primary">purA</name>
    <name type="synonym">adeK</name>
    <name type="ordered locus">BPP2844</name>
</gene>
<evidence type="ECO:0000255" key="1">
    <source>
        <dbReference type="HAMAP-Rule" id="MF_00011"/>
    </source>
</evidence>
<reference key="1">
    <citation type="journal article" date="2003" name="Nat. Genet.">
        <title>Comparative analysis of the genome sequences of Bordetella pertussis, Bordetella parapertussis and Bordetella bronchiseptica.</title>
        <authorList>
            <person name="Parkhill J."/>
            <person name="Sebaihia M."/>
            <person name="Preston A."/>
            <person name="Murphy L.D."/>
            <person name="Thomson N.R."/>
            <person name="Harris D.E."/>
            <person name="Holden M.T.G."/>
            <person name="Churcher C.M."/>
            <person name="Bentley S.D."/>
            <person name="Mungall K.L."/>
            <person name="Cerdeno-Tarraga A.-M."/>
            <person name="Temple L."/>
            <person name="James K.D."/>
            <person name="Harris B."/>
            <person name="Quail M.A."/>
            <person name="Achtman M."/>
            <person name="Atkin R."/>
            <person name="Baker S."/>
            <person name="Basham D."/>
            <person name="Bason N."/>
            <person name="Cherevach I."/>
            <person name="Chillingworth T."/>
            <person name="Collins M."/>
            <person name="Cronin A."/>
            <person name="Davis P."/>
            <person name="Doggett J."/>
            <person name="Feltwell T."/>
            <person name="Goble A."/>
            <person name="Hamlin N."/>
            <person name="Hauser H."/>
            <person name="Holroyd S."/>
            <person name="Jagels K."/>
            <person name="Leather S."/>
            <person name="Moule S."/>
            <person name="Norberczak H."/>
            <person name="O'Neil S."/>
            <person name="Ormond D."/>
            <person name="Price C."/>
            <person name="Rabbinowitsch E."/>
            <person name="Rutter S."/>
            <person name="Sanders M."/>
            <person name="Saunders D."/>
            <person name="Seeger K."/>
            <person name="Sharp S."/>
            <person name="Simmonds M."/>
            <person name="Skelton J."/>
            <person name="Squares R."/>
            <person name="Squares S."/>
            <person name="Stevens K."/>
            <person name="Unwin L."/>
            <person name="Whitehead S."/>
            <person name="Barrell B.G."/>
            <person name="Maskell D.J."/>
        </authorList>
    </citation>
    <scope>NUCLEOTIDE SEQUENCE [LARGE SCALE GENOMIC DNA]</scope>
    <source>
        <strain>12822 / ATCC BAA-587 / NCTC 13253</strain>
    </source>
</reference>
<comment type="function">
    <text evidence="1">Plays an important role in the de novo pathway of purine nucleotide biosynthesis. Catalyzes the first committed step in the biosynthesis of AMP from IMP.</text>
</comment>
<comment type="catalytic activity">
    <reaction evidence="1">
        <text>IMP + L-aspartate + GTP = N(6)-(1,2-dicarboxyethyl)-AMP + GDP + phosphate + 2 H(+)</text>
        <dbReference type="Rhea" id="RHEA:15753"/>
        <dbReference type="ChEBI" id="CHEBI:15378"/>
        <dbReference type="ChEBI" id="CHEBI:29991"/>
        <dbReference type="ChEBI" id="CHEBI:37565"/>
        <dbReference type="ChEBI" id="CHEBI:43474"/>
        <dbReference type="ChEBI" id="CHEBI:57567"/>
        <dbReference type="ChEBI" id="CHEBI:58053"/>
        <dbReference type="ChEBI" id="CHEBI:58189"/>
        <dbReference type="EC" id="6.3.4.4"/>
    </reaction>
</comment>
<comment type="cofactor">
    <cofactor evidence="1">
        <name>Mg(2+)</name>
        <dbReference type="ChEBI" id="CHEBI:18420"/>
    </cofactor>
    <text evidence="1">Binds 1 Mg(2+) ion per subunit.</text>
</comment>
<comment type="pathway">
    <text evidence="1">Purine metabolism; AMP biosynthesis via de novo pathway; AMP from IMP: step 1/2.</text>
</comment>
<comment type="subunit">
    <text evidence="1">Homodimer.</text>
</comment>
<comment type="subcellular location">
    <subcellularLocation>
        <location evidence="1">Cytoplasm</location>
    </subcellularLocation>
</comment>
<comment type="similarity">
    <text evidence="1">Belongs to the adenylosuccinate synthetase family.</text>
</comment>
<name>PURA_BORPA</name>
<dbReference type="EC" id="6.3.4.4" evidence="1"/>
<dbReference type="EMBL" id="BX640431">
    <property type="protein sequence ID" value="CAE38136.1"/>
    <property type="molecule type" value="Genomic_DNA"/>
</dbReference>
<dbReference type="SMR" id="Q7W6Q7"/>
<dbReference type="KEGG" id="bpa:BPP2844"/>
<dbReference type="HOGENOM" id="CLU_029848_0_0_4"/>
<dbReference type="UniPathway" id="UPA00075">
    <property type="reaction ID" value="UER00335"/>
</dbReference>
<dbReference type="Proteomes" id="UP000001421">
    <property type="component" value="Chromosome"/>
</dbReference>
<dbReference type="GO" id="GO:0005737">
    <property type="term" value="C:cytoplasm"/>
    <property type="evidence" value="ECO:0007669"/>
    <property type="project" value="UniProtKB-SubCell"/>
</dbReference>
<dbReference type="GO" id="GO:0004019">
    <property type="term" value="F:adenylosuccinate synthase activity"/>
    <property type="evidence" value="ECO:0007669"/>
    <property type="project" value="UniProtKB-UniRule"/>
</dbReference>
<dbReference type="GO" id="GO:0005525">
    <property type="term" value="F:GTP binding"/>
    <property type="evidence" value="ECO:0007669"/>
    <property type="project" value="UniProtKB-UniRule"/>
</dbReference>
<dbReference type="GO" id="GO:0000287">
    <property type="term" value="F:magnesium ion binding"/>
    <property type="evidence" value="ECO:0007669"/>
    <property type="project" value="UniProtKB-UniRule"/>
</dbReference>
<dbReference type="GO" id="GO:0044208">
    <property type="term" value="P:'de novo' AMP biosynthetic process"/>
    <property type="evidence" value="ECO:0007669"/>
    <property type="project" value="UniProtKB-UniRule"/>
</dbReference>
<dbReference type="GO" id="GO:0046040">
    <property type="term" value="P:IMP metabolic process"/>
    <property type="evidence" value="ECO:0007669"/>
    <property type="project" value="TreeGrafter"/>
</dbReference>
<dbReference type="CDD" id="cd03108">
    <property type="entry name" value="AdSS"/>
    <property type="match status" value="1"/>
</dbReference>
<dbReference type="FunFam" id="1.10.300.10:FF:000001">
    <property type="entry name" value="Adenylosuccinate synthetase"/>
    <property type="match status" value="1"/>
</dbReference>
<dbReference type="FunFam" id="3.90.170.10:FF:000001">
    <property type="entry name" value="Adenylosuccinate synthetase"/>
    <property type="match status" value="1"/>
</dbReference>
<dbReference type="Gene3D" id="3.40.440.10">
    <property type="entry name" value="Adenylosuccinate Synthetase, subunit A, domain 1"/>
    <property type="match status" value="1"/>
</dbReference>
<dbReference type="Gene3D" id="1.10.300.10">
    <property type="entry name" value="Adenylosuccinate Synthetase, subunit A, domain 2"/>
    <property type="match status" value="1"/>
</dbReference>
<dbReference type="Gene3D" id="3.90.170.10">
    <property type="entry name" value="Adenylosuccinate Synthetase, subunit A, domain 3"/>
    <property type="match status" value="1"/>
</dbReference>
<dbReference type="HAMAP" id="MF_00011">
    <property type="entry name" value="Adenylosucc_synth"/>
    <property type="match status" value="1"/>
</dbReference>
<dbReference type="InterPro" id="IPR018220">
    <property type="entry name" value="Adenylosuccin_syn_GTP-bd"/>
</dbReference>
<dbReference type="InterPro" id="IPR033128">
    <property type="entry name" value="Adenylosuccin_syn_Lys_AS"/>
</dbReference>
<dbReference type="InterPro" id="IPR042109">
    <property type="entry name" value="Adenylosuccinate_synth_dom1"/>
</dbReference>
<dbReference type="InterPro" id="IPR042110">
    <property type="entry name" value="Adenylosuccinate_synth_dom2"/>
</dbReference>
<dbReference type="InterPro" id="IPR042111">
    <property type="entry name" value="Adenylosuccinate_synth_dom3"/>
</dbReference>
<dbReference type="InterPro" id="IPR001114">
    <property type="entry name" value="Adenylosuccinate_synthetase"/>
</dbReference>
<dbReference type="InterPro" id="IPR027417">
    <property type="entry name" value="P-loop_NTPase"/>
</dbReference>
<dbReference type="NCBIfam" id="NF002223">
    <property type="entry name" value="PRK01117.1"/>
    <property type="match status" value="1"/>
</dbReference>
<dbReference type="NCBIfam" id="TIGR00184">
    <property type="entry name" value="purA"/>
    <property type="match status" value="1"/>
</dbReference>
<dbReference type="PANTHER" id="PTHR11846">
    <property type="entry name" value="ADENYLOSUCCINATE SYNTHETASE"/>
    <property type="match status" value="1"/>
</dbReference>
<dbReference type="PANTHER" id="PTHR11846:SF0">
    <property type="entry name" value="ADENYLOSUCCINATE SYNTHETASE"/>
    <property type="match status" value="1"/>
</dbReference>
<dbReference type="Pfam" id="PF00709">
    <property type="entry name" value="Adenylsucc_synt"/>
    <property type="match status" value="1"/>
</dbReference>
<dbReference type="SMART" id="SM00788">
    <property type="entry name" value="Adenylsucc_synt"/>
    <property type="match status" value="1"/>
</dbReference>
<dbReference type="SUPFAM" id="SSF52540">
    <property type="entry name" value="P-loop containing nucleoside triphosphate hydrolases"/>
    <property type="match status" value="1"/>
</dbReference>
<dbReference type="PROSITE" id="PS01266">
    <property type="entry name" value="ADENYLOSUCCIN_SYN_1"/>
    <property type="match status" value="1"/>
</dbReference>
<dbReference type="PROSITE" id="PS00513">
    <property type="entry name" value="ADENYLOSUCCIN_SYN_2"/>
    <property type="match status" value="1"/>
</dbReference>